<evidence type="ECO:0000255" key="1">
    <source>
        <dbReference type="PROSITE-ProRule" id="PRU00519"/>
    </source>
</evidence>
<evidence type="ECO:0000256" key="2">
    <source>
        <dbReference type="SAM" id="MobiDB-lite"/>
    </source>
</evidence>
<evidence type="ECO:0000305" key="3"/>
<comment type="function">
    <text>Probably plays a role in anchoring the complex to other cellular components.</text>
</comment>
<comment type="subunit">
    <text>EF-1 is composed of four subunits: alpha, beta, delta, and gamma.</text>
</comment>
<dbReference type="EMBL" id="D14606">
    <property type="protein sequence ID" value="BAA03456.1"/>
    <property type="molecule type" value="Genomic_DNA"/>
</dbReference>
<dbReference type="EMBL" id="CU329670">
    <property type="protein sequence ID" value="CAB10129.1"/>
    <property type="molecule type" value="Genomic_DNA"/>
</dbReference>
<dbReference type="PIR" id="JT0764">
    <property type="entry name" value="JT0764"/>
</dbReference>
<dbReference type="PIR" id="T38487">
    <property type="entry name" value="T38487"/>
</dbReference>
<dbReference type="RefSeq" id="NP_594880.1">
    <property type="nucleotide sequence ID" value="NM_001020309.2"/>
</dbReference>
<dbReference type="SMR" id="P40921"/>
<dbReference type="FunCoup" id="P40921">
    <property type="interactions" value="749"/>
</dbReference>
<dbReference type="STRING" id="284812.P40921"/>
<dbReference type="iPTMnet" id="P40921"/>
<dbReference type="PaxDb" id="4896-SPAC29A4.02c.1"/>
<dbReference type="KEGG" id="spo:2542298"/>
<dbReference type="PomBase" id="SPAC29A4.02c"/>
<dbReference type="eggNOG" id="KOG0867">
    <property type="taxonomic scope" value="Eukaryota"/>
</dbReference>
<dbReference type="eggNOG" id="KOG1627">
    <property type="taxonomic scope" value="Eukaryota"/>
</dbReference>
<dbReference type="HOGENOM" id="CLU_011226_3_0_1"/>
<dbReference type="InParanoid" id="P40921"/>
<dbReference type="PhylomeDB" id="P40921"/>
<dbReference type="PRO" id="PR:P40921"/>
<dbReference type="Proteomes" id="UP000002485">
    <property type="component" value="Chromosome I"/>
</dbReference>
<dbReference type="GO" id="GO:0005737">
    <property type="term" value="C:cytoplasm"/>
    <property type="evidence" value="ECO:0000318"/>
    <property type="project" value="GO_Central"/>
</dbReference>
<dbReference type="GO" id="GO:0005829">
    <property type="term" value="C:cytosol"/>
    <property type="evidence" value="ECO:0007005"/>
    <property type="project" value="PomBase"/>
</dbReference>
<dbReference type="GO" id="GO:0005634">
    <property type="term" value="C:nucleus"/>
    <property type="evidence" value="ECO:0000318"/>
    <property type="project" value="GO_Central"/>
</dbReference>
<dbReference type="GO" id="GO:0003746">
    <property type="term" value="F:translation elongation factor activity"/>
    <property type="evidence" value="ECO:0000266"/>
    <property type="project" value="PomBase"/>
</dbReference>
<dbReference type="GO" id="GO:0002182">
    <property type="term" value="P:cytoplasmic translational elongation"/>
    <property type="evidence" value="ECO:0000314"/>
    <property type="project" value="PomBase"/>
</dbReference>
<dbReference type="GO" id="GO:0006414">
    <property type="term" value="P:translational elongation"/>
    <property type="evidence" value="ECO:0000318"/>
    <property type="project" value="GO_Central"/>
</dbReference>
<dbReference type="CDD" id="cd03181">
    <property type="entry name" value="GST_C_EF1Bgamma_like"/>
    <property type="match status" value="1"/>
</dbReference>
<dbReference type="CDD" id="cd03044">
    <property type="entry name" value="GST_N_EF1Bgamma"/>
    <property type="match status" value="1"/>
</dbReference>
<dbReference type="FunFam" id="1.20.1050.10:FF:000006">
    <property type="entry name" value="Elongation factor 1 gamma"/>
    <property type="match status" value="1"/>
</dbReference>
<dbReference type="FunFam" id="3.40.30.10:FF:000142">
    <property type="entry name" value="Elongation factor 1 gamma"/>
    <property type="match status" value="1"/>
</dbReference>
<dbReference type="FunFam" id="3.30.70.1010:FF:000001">
    <property type="entry name" value="Elongation factor 1-gamma 1"/>
    <property type="match status" value="1"/>
</dbReference>
<dbReference type="Gene3D" id="1.20.1050.10">
    <property type="match status" value="1"/>
</dbReference>
<dbReference type="Gene3D" id="3.40.30.10">
    <property type="entry name" value="Glutaredoxin"/>
    <property type="match status" value="1"/>
</dbReference>
<dbReference type="Gene3D" id="3.30.70.1010">
    <property type="entry name" value="Translation elongation factor EF1B, gamma chain, conserved domain"/>
    <property type="match status" value="1"/>
</dbReference>
<dbReference type="InterPro" id="IPR050802">
    <property type="entry name" value="EF-GSTs"/>
</dbReference>
<dbReference type="InterPro" id="IPR001662">
    <property type="entry name" value="EF1B_G_C"/>
</dbReference>
<dbReference type="InterPro" id="IPR036433">
    <property type="entry name" value="EF1B_G_C_sf"/>
</dbReference>
<dbReference type="InterPro" id="IPR010987">
    <property type="entry name" value="Glutathione-S-Trfase_C-like"/>
</dbReference>
<dbReference type="InterPro" id="IPR036282">
    <property type="entry name" value="Glutathione-S-Trfase_C_sf"/>
</dbReference>
<dbReference type="InterPro" id="IPR040079">
    <property type="entry name" value="Glutathione_S-Trfase"/>
</dbReference>
<dbReference type="InterPro" id="IPR004045">
    <property type="entry name" value="Glutathione_S-Trfase_N"/>
</dbReference>
<dbReference type="InterPro" id="IPR004046">
    <property type="entry name" value="GST_C"/>
</dbReference>
<dbReference type="InterPro" id="IPR036249">
    <property type="entry name" value="Thioredoxin-like_sf"/>
</dbReference>
<dbReference type="PANTHER" id="PTHR43986">
    <property type="entry name" value="ELONGATION FACTOR 1-GAMMA"/>
    <property type="match status" value="1"/>
</dbReference>
<dbReference type="PANTHER" id="PTHR43986:SF11">
    <property type="entry name" value="ELONGATION FACTOR 1-GAMMA"/>
    <property type="match status" value="1"/>
</dbReference>
<dbReference type="Pfam" id="PF00647">
    <property type="entry name" value="EF1G"/>
    <property type="match status" value="1"/>
</dbReference>
<dbReference type="Pfam" id="PF00043">
    <property type="entry name" value="GST_C"/>
    <property type="match status" value="1"/>
</dbReference>
<dbReference type="Pfam" id="PF02798">
    <property type="entry name" value="GST_N"/>
    <property type="match status" value="1"/>
</dbReference>
<dbReference type="SFLD" id="SFLDS00019">
    <property type="entry name" value="Glutathione_Transferase_(cytos"/>
    <property type="match status" value="1"/>
</dbReference>
<dbReference type="SFLD" id="SFLDG00358">
    <property type="entry name" value="Main_(cytGST)"/>
    <property type="match status" value="1"/>
</dbReference>
<dbReference type="SMART" id="SM01183">
    <property type="entry name" value="EF1G"/>
    <property type="match status" value="1"/>
</dbReference>
<dbReference type="SUPFAM" id="SSF89942">
    <property type="entry name" value="eEF1-gamma domain"/>
    <property type="match status" value="1"/>
</dbReference>
<dbReference type="SUPFAM" id="SSF47616">
    <property type="entry name" value="GST C-terminal domain-like"/>
    <property type="match status" value="1"/>
</dbReference>
<dbReference type="SUPFAM" id="SSF52833">
    <property type="entry name" value="Thioredoxin-like"/>
    <property type="match status" value="1"/>
</dbReference>
<dbReference type="PROSITE" id="PS50040">
    <property type="entry name" value="EF1G_C"/>
    <property type="match status" value="1"/>
</dbReference>
<dbReference type="PROSITE" id="PS50405">
    <property type="entry name" value="GST_CTER"/>
    <property type="match status" value="1"/>
</dbReference>
<dbReference type="PROSITE" id="PS50404">
    <property type="entry name" value="GST_NTER"/>
    <property type="match status" value="1"/>
</dbReference>
<organism>
    <name type="scientific">Schizosaccharomyces pombe (strain 972 / ATCC 24843)</name>
    <name type="common">Fission yeast</name>
    <dbReference type="NCBI Taxonomy" id="284812"/>
    <lineage>
        <taxon>Eukaryota</taxon>
        <taxon>Fungi</taxon>
        <taxon>Dikarya</taxon>
        <taxon>Ascomycota</taxon>
        <taxon>Taphrinomycotina</taxon>
        <taxon>Schizosaccharomycetes</taxon>
        <taxon>Schizosaccharomycetales</taxon>
        <taxon>Schizosaccharomycetaceae</taxon>
        <taxon>Schizosaccharomyces</taxon>
    </lineage>
</organism>
<keyword id="KW-0903">Direct protein sequencing</keyword>
<keyword id="KW-0251">Elongation factor</keyword>
<keyword id="KW-0648">Protein biosynthesis</keyword>
<keyword id="KW-1185">Reference proteome</keyword>
<reference key="1">
    <citation type="journal article" date="1993" name="Gene">
        <title>Sequence of a fission yeast gene encoding a protein with extensive homology to eukaryotic elongation factor-1 gamma.</title>
        <authorList>
            <person name="Momoi H."/>
            <person name="Yamada H."/>
            <person name="Ueguchi C."/>
            <person name="Mizuno T."/>
        </authorList>
    </citation>
    <scope>NUCLEOTIDE SEQUENCE [GENOMIC DNA]</scope>
    <scope>PROTEIN SEQUENCE OF 226-244</scope>
    <source>
        <strain>972 / ATCC 24843</strain>
    </source>
</reference>
<reference key="2">
    <citation type="journal article" date="2002" name="Nature">
        <title>The genome sequence of Schizosaccharomyces pombe.</title>
        <authorList>
            <person name="Wood V."/>
            <person name="Gwilliam R."/>
            <person name="Rajandream M.A."/>
            <person name="Lyne M.H."/>
            <person name="Lyne R."/>
            <person name="Stewart A."/>
            <person name="Sgouros J.G."/>
            <person name="Peat N."/>
            <person name="Hayles J."/>
            <person name="Baker S.G."/>
            <person name="Basham D."/>
            <person name="Bowman S."/>
            <person name="Brooks K."/>
            <person name="Brown D."/>
            <person name="Brown S."/>
            <person name="Chillingworth T."/>
            <person name="Churcher C.M."/>
            <person name="Collins M."/>
            <person name="Connor R."/>
            <person name="Cronin A."/>
            <person name="Davis P."/>
            <person name="Feltwell T."/>
            <person name="Fraser A."/>
            <person name="Gentles S."/>
            <person name="Goble A."/>
            <person name="Hamlin N."/>
            <person name="Harris D.E."/>
            <person name="Hidalgo J."/>
            <person name="Hodgson G."/>
            <person name="Holroyd S."/>
            <person name="Hornsby T."/>
            <person name="Howarth S."/>
            <person name="Huckle E.J."/>
            <person name="Hunt S."/>
            <person name="Jagels K."/>
            <person name="James K.D."/>
            <person name="Jones L."/>
            <person name="Jones M."/>
            <person name="Leather S."/>
            <person name="McDonald S."/>
            <person name="McLean J."/>
            <person name="Mooney P."/>
            <person name="Moule S."/>
            <person name="Mungall K.L."/>
            <person name="Murphy L.D."/>
            <person name="Niblett D."/>
            <person name="Odell C."/>
            <person name="Oliver K."/>
            <person name="O'Neil S."/>
            <person name="Pearson D."/>
            <person name="Quail M.A."/>
            <person name="Rabbinowitsch E."/>
            <person name="Rutherford K.M."/>
            <person name="Rutter S."/>
            <person name="Saunders D."/>
            <person name="Seeger K."/>
            <person name="Sharp S."/>
            <person name="Skelton J."/>
            <person name="Simmonds M.N."/>
            <person name="Squares R."/>
            <person name="Squares S."/>
            <person name="Stevens K."/>
            <person name="Taylor K."/>
            <person name="Taylor R.G."/>
            <person name="Tivey A."/>
            <person name="Walsh S.V."/>
            <person name="Warren T."/>
            <person name="Whitehead S."/>
            <person name="Woodward J.R."/>
            <person name="Volckaert G."/>
            <person name="Aert R."/>
            <person name="Robben J."/>
            <person name="Grymonprez B."/>
            <person name="Weltjens I."/>
            <person name="Vanstreels E."/>
            <person name="Rieger M."/>
            <person name="Schaefer M."/>
            <person name="Mueller-Auer S."/>
            <person name="Gabel C."/>
            <person name="Fuchs M."/>
            <person name="Duesterhoeft A."/>
            <person name="Fritzc C."/>
            <person name="Holzer E."/>
            <person name="Moestl D."/>
            <person name="Hilbert H."/>
            <person name="Borzym K."/>
            <person name="Langer I."/>
            <person name="Beck A."/>
            <person name="Lehrach H."/>
            <person name="Reinhardt R."/>
            <person name="Pohl T.M."/>
            <person name="Eger P."/>
            <person name="Zimmermann W."/>
            <person name="Wedler H."/>
            <person name="Wambutt R."/>
            <person name="Purnelle B."/>
            <person name="Goffeau A."/>
            <person name="Cadieu E."/>
            <person name="Dreano S."/>
            <person name="Gloux S."/>
            <person name="Lelaure V."/>
            <person name="Mottier S."/>
            <person name="Galibert F."/>
            <person name="Aves S.J."/>
            <person name="Xiang Z."/>
            <person name="Hunt C."/>
            <person name="Moore K."/>
            <person name="Hurst S.M."/>
            <person name="Lucas M."/>
            <person name="Rochet M."/>
            <person name="Gaillardin C."/>
            <person name="Tallada V.A."/>
            <person name="Garzon A."/>
            <person name="Thode G."/>
            <person name="Daga R.R."/>
            <person name="Cruzado L."/>
            <person name="Jimenez J."/>
            <person name="Sanchez M."/>
            <person name="del Rey F."/>
            <person name="Benito J."/>
            <person name="Dominguez A."/>
            <person name="Revuelta J.L."/>
            <person name="Moreno S."/>
            <person name="Armstrong J."/>
            <person name="Forsburg S.L."/>
            <person name="Cerutti L."/>
            <person name="Lowe T."/>
            <person name="McCombie W.R."/>
            <person name="Paulsen I."/>
            <person name="Potashkin J."/>
            <person name="Shpakovski G.V."/>
            <person name="Ussery D."/>
            <person name="Barrell B.G."/>
            <person name="Nurse P."/>
        </authorList>
    </citation>
    <scope>NUCLEOTIDE SEQUENCE [LARGE SCALE GENOMIC DNA]</scope>
    <source>
        <strain>972 / ATCC 24843</strain>
    </source>
</reference>
<proteinExistence type="evidence at protein level"/>
<name>EF1G_SCHPO</name>
<protein>
    <recommendedName>
        <fullName>Elongation factor 1-gamma</fullName>
        <shortName>EF-1-gamma</shortName>
    </recommendedName>
    <alternativeName>
        <fullName>eEF-1B gamma</fullName>
    </alternativeName>
</protein>
<gene>
    <name type="primary">tef3</name>
    <name type="ORF">SPAC29A4.02c</name>
</gene>
<feature type="chain" id="PRO_0000208830" description="Elongation factor 1-gamma">
    <location>
        <begin position="1"/>
        <end position="409"/>
    </location>
</feature>
<feature type="domain" description="GST N-terminal">
    <location>
        <begin position="2"/>
        <end position="81"/>
    </location>
</feature>
<feature type="domain" description="GST C-terminal">
    <location>
        <begin position="86"/>
        <end position="212"/>
    </location>
</feature>
<feature type="domain" description="EF-1-gamma C-terminal" evidence="1">
    <location>
        <begin position="251"/>
        <end position="409"/>
    </location>
</feature>
<feature type="region of interest" description="Disordered" evidence="2">
    <location>
        <begin position="219"/>
        <end position="261"/>
    </location>
</feature>
<feature type="compositionally biased region" description="Basic and acidic residues" evidence="2">
    <location>
        <begin position="219"/>
        <end position="248"/>
    </location>
</feature>
<feature type="sequence conflict" description="In Ref. 2; CAB10129." evidence="3" ref="2">
    <original>R</original>
    <variation>A</variation>
    <location>
        <position position="246"/>
    </location>
</feature>
<sequence length="409" mass="45786">MSVGTVYGKIGSPRVLFCVSVAAVAGVEVEHVDVQPHNFPADLAAKFPLQKMPVFVGKDGFPLSETLAIAFYLASLNKTRALNGTTAEEKAKVLQYCSFTNSELPGAFRPIIAPRVFGAPYDEQAAKEAETAIALIFARFDEELASKTYLVGSRLTLADIFFTCFLKFGATYVLTKSYLAKYTHIYRYYQTIYHQAKLDAITEPLKFIDQPLPIIKAENKEAAPAKKAEKKKDEKKKNAPKPQAERPAKPPKHPLASAPNGSFDIEEYKRVYSNQDTRSGALPWFFEHFDPENYSVWKVDYSYPEDLKQPVFMTNNLIGGFFQRLEASRKYIFGCCVVIGENGDNTITGAFVIKGHDYVPAFDVAPDWGSYTFTKLDINKPEDKAFIEDAWAWDKPIEGREVADGKVCK</sequence>
<accession>P40921</accession>
<accession>O14005</accession>